<organism>
    <name type="scientific">Escherichia coli O81 (strain ED1a)</name>
    <dbReference type="NCBI Taxonomy" id="585397"/>
    <lineage>
        <taxon>Bacteria</taxon>
        <taxon>Pseudomonadati</taxon>
        <taxon>Pseudomonadota</taxon>
        <taxon>Gammaproteobacteria</taxon>
        <taxon>Enterobacterales</taxon>
        <taxon>Enterobacteriaceae</taxon>
        <taxon>Escherichia</taxon>
    </lineage>
</organism>
<evidence type="ECO:0000255" key="1">
    <source>
        <dbReference type="HAMAP-Rule" id="MF_00223"/>
    </source>
</evidence>
<comment type="catalytic activity">
    <reaction evidence="1">
        <text>GTP + H2O = 7,8-dihydroneopterin 3'-triphosphate + formate + H(+)</text>
        <dbReference type="Rhea" id="RHEA:17473"/>
        <dbReference type="ChEBI" id="CHEBI:15377"/>
        <dbReference type="ChEBI" id="CHEBI:15378"/>
        <dbReference type="ChEBI" id="CHEBI:15740"/>
        <dbReference type="ChEBI" id="CHEBI:37565"/>
        <dbReference type="ChEBI" id="CHEBI:58462"/>
        <dbReference type="EC" id="3.5.4.16"/>
    </reaction>
</comment>
<comment type="pathway">
    <text evidence="1">Cofactor biosynthesis; 7,8-dihydroneopterin triphosphate biosynthesis; 7,8-dihydroneopterin triphosphate from GTP: step 1/1.</text>
</comment>
<comment type="subunit">
    <text evidence="1">Homomer.</text>
</comment>
<comment type="similarity">
    <text evidence="1">Belongs to the GTP cyclohydrolase I family.</text>
</comment>
<keyword id="KW-0342">GTP-binding</keyword>
<keyword id="KW-0378">Hydrolase</keyword>
<keyword id="KW-0479">Metal-binding</keyword>
<keyword id="KW-0547">Nucleotide-binding</keyword>
<keyword id="KW-0554">One-carbon metabolism</keyword>
<keyword id="KW-0862">Zinc</keyword>
<gene>
    <name evidence="1" type="primary">folE</name>
    <name type="ordered locus">ECED1_2601</name>
</gene>
<dbReference type="EC" id="3.5.4.16" evidence="1"/>
<dbReference type="EMBL" id="CU928162">
    <property type="protein sequence ID" value="CAR08782.2"/>
    <property type="molecule type" value="Genomic_DNA"/>
</dbReference>
<dbReference type="RefSeq" id="WP_001139613.1">
    <property type="nucleotide sequence ID" value="NC_011745.1"/>
</dbReference>
<dbReference type="SMR" id="B7MXG6"/>
<dbReference type="GeneID" id="93775029"/>
<dbReference type="KEGG" id="ecq:ECED1_2601"/>
<dbReference type="HOGENOM" id="CLU_049768_3_2_6"/>
<dbReference type="UniPathway" id="UPA00848">
    <property type="reaction ID" value="UER00151"/>
</dbReference>
<dbReference type="Proteomes" id="UP000000748">
    <property type="component" value="Chromosome"/>
</dbReference>
<dbReference type="GO" id="GO:0005737">
    <property type="term" value="C:cytoplasm"/>
    <property type="evidence" value="ECO:0007669"/>
    <property type="project" value="TreeGrafter"/>
</dbReference>
<dbReference type="GO" id="GO:0005525">
    <property type="term" value="F:GTP binding"/>
    <property type="evidence" value="ECO:0007669"/>
    <property type="project" value="UniProtKB-KW"/>
</dbReference>
<dbReference type="GO" id="GO:0003934">
    <property type="term" value="F:GTP cyclohydrolase I activity"/>
    <property type="evidence" value="ECO:0007669"/>
    <property type="project" value="UniProtKB-UniRule"/>
</dbReference>
<dbReference type="GO" id="GO:0008270">
    <property type="term" value="F:zinc ion binding"/>
    <property type="evidence" value="ECO:0007669"/>
    <property type="project" value="UniProtKB-UniRule"/>
</dbReference>
<dbReference type="GO" id="GO:0006730">
    <property type="term" value="P:one-carbon metabolic process"/>
    <property type="evidence" value="ECO:0007669"/>
    <property type="project" value="UniProtKB-UniRule"/>
</dbReference>
<dbReference type="GO" id="GO:0006729">
    <property type="term" value="P:tetrahydrobiopterin biosynthetic process"/>
    <property type="evidence" value="ECO:0007669"/>
    <property type="project" value="TreeGrafter"/>
</dbReference>
<dbReference type="GO" id="GO:0046654">
    <property type="term" value="P:tetrahydrofolate biosynthetic process"/>
    <property type="evidence" value="ECO:0007669"/>
    <property type="project" value="UniProtKB-UniRule"/>
</dbReference>
<dbReference type="CDD" id="cd00642">
    <property type="entry name" value="GTP_cyclohydro1"/>
    <property type="match status" value="1"/>
</dbReference>
<dbReference type="FunFam" id="1.10.286.10:FF:000002">
    <property type="entry name" value="GTP cyclohydrolase 1"/>
    <property type="match status" value="1"/>
</dbReference>
<dbReference type="FunFam" id="3.30.1130.10:FF:000001">
    <property type="entry name" value="GTP cyclohydrolase 1"/>
    <property type="match status" value="1"/>
</dbReference>
<dbReference type="Gene3D" id="1.10.286.10">
    <property type="match status" value="1"/>
</dbReference>
<dbReference type="Gene3D" id="3.30.1130.10">
    <property type="match status" value="1"/>
</dbReference>
<dbReference type="HAMAP" id="MF_00223">
    <property type="entry name" value="FolE"/>
    <property type="match status" value="1"/>
</dbReference>
<dbReference type="InterPro" id="IPR043133">
    <property type="entry name" value="GTP-CH-I_C/QueF"/>
</dbReference>
<dbReference type="InterPro" id="IPR043134">
    <property type="entry name" value="GTP-CH-I_N"/>
</dbReference>
<dbReference type="InterPro" id="IPR001474">
    <property type="entry name" value="GTP_CycHdrlase_I"/>
</dbReference>
<dbReference type="InterPro" id="IPR018234">
    <property type="entry name" value="GTP_CycHdrlase_I_CS"/>
</dbReference>
<dbReference type="InterPro" id="IPR020602">
    <property type="entry name" value="GTP_CycHdrlase_I_dom"/>
</dbReference>
<dbReference type="NCBIfam" id="TIGR00063">
    <property type="entry name" value="folE"/>
    <property type="match status" value="1"/>
</dbReference>
<dbReference type="NCBIfam" id="NF006824">
    <property type="entry name" value="PRK09347.1-1"/>
    <property type="match status" value="1"/>
</dbReference>
<dbReference type="NCBIfam" id="NF006826">
    <property type="entry name" value="PRK09347.1-3"/>
    <property type="match status" value="1"/>
</dbReference>
<dbReference type="PANTHER" id="PTHR11109:SF7">
    <property type="entry name" value="GTP CYCLOHYDROLASE 1"/>
    <property type="match status" value="1"/>
</dbReference>
<dbReference type="PANTHER" id="PTHR11109">
    <property type="entry name" value="GTP CYCLOHYDROLASE I"/>
    <property type="match status" value="1"/>
</dbReference>
<dbReference type="Pfam" id="PF01227">
    <property type="entry name" value="GTP_cyclohydroI"/>
    <property type="match status" value="1"/>
</dbReference>
<dbReference type="SUPFAM" id="SSF55620">
    <property type="entry name" value="Tetrahydrobiopterin biosynthesis enzymes-like"/>
    <property type="match status" value="1"/>
</dbReference>
<dbReference type="PROSITE" id="PS00859">
    <property type="entry name" value="GTP_CYCLOHYDROL_1_1"/>
    <property type="match status" value="1"/>
</dbReference>
<dbReference type="PROSITE" id="PS00860">
    <property type="entry name" value="GTP_CYCLOHYDROL_1_2"/>
    <property type="match status" value="1"/>
</dbReference>
<proteinExistence type="inferred from homology"/>
<protein>
    <recommendedName>
        <fullName evidence="1">GTP cyclohydrolase 1</fullName>
        <ecNumber evidence="1">3.5.4.16</ecNumber>
    </recommendedName>
    <alternativeName>
        <fullName evidence="1">GTP cyclohydrolase I</fullName>
        <shortName evidence="1">GTP-CH-I</shortName>
    </alternativeName>
</protein>
<reference key="1">
    <citation type="journal article" date="2009" name="PLoS Genet.">
        <title>Organised genome dynamics in the Escherichia coli species results in highly diverse adaptive paths.</title>
        <authorList>
            <person name="Touchon M."/>
            <person name="Hoede C."/>
            <person name="Tenaillon O."/>
            <person name="Barbe V."/>
            <person name="Baeriswyl S."/>
            <person name="Bidet P."/>
            <person name="Bingen E."/>
            <person name="Bonacorsi S."/>
            <person name="Bouchier C."/>
            <person name="Bouvet O."/>
            <person name="Calteau A."/>
            <person name="Chiapello H."/>
            <person name="Clermont O."/>
            <person name="Cruveiller S."/>
            <person name="Danchin A."/>
            <person name="Diard M."/>
            <person name="Dossat C."/>
            <person name="Karoui M.E."/>
            <person name="Frapy E."/>
            <person name="Garry L."/>
            <person name="Ghigo J.M."/>
            <person name="Gilles A.M."/>
            <person name="Johnson J."/>
            <person name="Le Bouguenec C."/>
            <person name="Lescat M."/>
            <person name="Mangenot S."/>
            <person name="Martinez-Jehanne V."/>
            <person name="Matic I."/>
            <person name="Nassif X."/>
            <person name="Oztas S."/>
            <person name="Petit M.A."/>
            <person name="Pichon C."/>
            <person name="Rouy Z."/>
            <person name="Ruf C.S."/>
            <person name="Schneider D."/>
            <person name="Tourret J."/>
            <person name="Vacherie B."/>
            <person name="Vallenet D."/>
            <person name="Medigue C."/>
            <person name="Rocha E.P.C."/>
            <person name="Denamur E."/>
        </authorList>
    </citation>
    <scope>NUCLEOTIDE SEQUENCE [LARGE SCALE GENOMIC DNA]</scope>
    <source>
        <strain>ED1a</strain>
    </source>
</reference>
<feature type="chain" id="PRO_1000124919" description="GTP cyclohydrolase 1">
    <location>
        <begin position="1"/>
        <end position="222"/>
    </location>
</feature>
<feature type="binding site" evidence="1">
    <location>
        <position position="111"/>
    </location>
    <ligand>
        <name>Zn(2+)</name>
        <dbReference type="ChEBI" id="CHEBI:29105"/>
    </ligand>
</feature>
<feature type="binding site" evidence="1">
    <location>
        <position position="114"/>
    </location>
    <ligand>
        <name>Zn(2+)</name>
        <dbReference type="ChEBI" id="CHEBI:29105"/>
    </ligand>
</feature>
<feature type="binding site" evidence="1">
    <location>
        <position position="182"/>
    </location>
    <ligand>
        <name>Zn(2+)</name>
        <dbReference type="ChEBI" id="CHEBI:29105"/>
    </ligand>
</feature>
<sequence length="222" mass="24831">MPSLSKEAALVHEALVARGLETPLRPPVHEMDNETRKSLIAGHMTEIMQLLNLDLADDSLMETPHRIAKMYVDEIFSGLDYANFPKITLIENKMKVDEMVTVRDITLTSTCEHHFVTIDGKATVAYIPKDSVIGLSKINRIVQFFAQRPQVQERLTQQILIALQTLLGTNNVAVSIDAVHYCVKARGIRDATSATTTTSLGGLFKSSQNTRHEFLRAVRHHN</sequence>
<name>GCH1_ECO81</name>
<accession>B7MXG6</accession>